<proteinExistence type="inferred from homology"/>
<sequence>MDFKQHIAIVPDYPKEGIVFKDITPLMNDGKAYKAATDAIVEYAKERDIDLVVGPEARGFIIGCPVSYALEVGFAPVRKLGKLPREVITVDYGKEYGKDVLTIHKDAIKPGQRVLITDDLLATGGTIEATIKLVEELGGVVAGIAFLVELTYLDGRKMLDGYDVLVLEKY</sequence>
<feature type="chain" id="PRO_1000000256" description="Adenine phosphoribosyltransferase">
    <location>
        <begin position="1"/>
        <end position="170"/>
    </location>
</feature>
<organism>
    <name type="scientific">Bacillus thuringiensis (strain Al Hakam)</name>
    <dbReference type="NCBI Taxonomy" id="412694"/>
    <lineage>
        <taxon>Bacteria</taxon>
        <taxon>Bacillati</taxon>
        <taxon>Bacillota</taxon>
        <taxon>Bacilli</taxon>
        <taxon>Bacillales</taxon>
        <taxon>Bacillaceae</taxon>
        <taxon>Bacillus</taxon>
        <taxon>Bacillus cereus group</taxon>
    </lineage>
</organism>
<reference key="1">
    <citation type="journal article" date="2007" name="J. Bacteriol.">
        <title>The complete genome sequence of Bacillus thuringiensis Al Hakam.</title>
        <authorList>
            <person name="Challacombe J.F."/>
            <person name="Altherr M.R."/>
            <person name="Xie G."/>
            <person name="Bhotika S.S."/>
            <person name="Brown N."/>
            <person name="Bruce D."/>
            <person name="Campbell C.S."/>
            <person name="Campbell M.L."/>
            <person name="Chen J."/>
            <person name="Chertkov O."/>
            <person name="Cleland C."/>
            <person name="Dimitrijevic M."/>
            <person name="Doggett N.A."/>
            <person name="Fawcett J.J."/>
            <person name="Glavina T."/>
            <person name="Goodwin L.A."/>
            <person name="Green L.D."/>
            <person name="Han C.S."/>
            <person name="Hill K.K."/>
            <person name="Hitchcock P."/>
            <person name="Jackson P.J."/>
            <person name="Keim P."/>
            <person name="Kewalramani A.R."/>
            <person name="Longmire J."/>
            <person name="Lucas S."/>
            <person name="Malfatti S."/>
            <person name="Martinez D."/>
            <person name="McMurry K."/>
            <person name="Meincke L.J."/>
            <person name="Misra M."/>
            <person name="Moseman B.L."/>
            <person name="Mundt M."/>
            <person name="Munk A.C."/>
            <person name="Okinaka R.T."/>
            <person name="Parson-Quintana B."/>
            <person name="Reilly L.P."/>
            <person name="Richardson P."/>
            <person name="Robinson D.L."/>
            <person name="Saunders E."/>
            <person name="Tapia R."/>
            <person name="Tesmer J.G."/>
            <person name="Thayer N."/>
            <person name="Thompson L.S."/>
            <person name="Tice H."/>
            <person name="Ticknor L.O."/>
            <person name="Wills P.L."/>
            <person name="Gilna P."/>
            <person name="Brettin T.S."/>
        </authorList>
    </citation>
    <scope>NUCLEOTIDE SEQUENCE [LARGE SCALE GENOMIC DNA]</scope>
    <source>
        <strain>Al Hakam</strain>
    </source>
</reference>
<gene>
    <name evidence="1" type="primary">apt</name>
    <name type="ordered locus">BALH_3989</name>
</gene>
<keyword id="KW-0963">Cytoplasm</keyword>
<keyword id="KW-0328">Glycosyltransferase</keyword>
<keyword id="KW-0660">Purine salvage</keyword>
<keyword id="KW-0808">Transferase</keyword>
<comment type="function">
    <text evidence="1">Catalyzes a salvage reaction resulting in the formation of AMP, that is energically less costly than de novo synthesis.</text>
</comment>
<comment type="catalytic activity">
    <reaction evidence="1">
        <text>AMP + diphosphate = 5-phospho-alpha-D-ribose 1-diphosphate + adenine</text>
        <dbReference type="Rhea" id="RHEA:16609"/>
        <dbReference type="ChEBI" id="CHEBI:16708"/>
        <dbReference type="ChEBI" id="CHEBI:33019"/>
        <dbReference type="ChEBI" id="CHEBI:58017"/>
        <dbReference type="ChEBI" id="CHEBI:456215"/>
        <dbReference type="EC" id="2.4.2.7"/>
    </reaction>
</comment>
<comment type="pathway">
    <text evidence="1">Purine metabolism; AMP biosynthesis via salvage pathway; AMP from adenine: step 1/1.</text>
</comment>
<comment type="subunit">
    <text evidence="1">Homodimer.</text>
</comment>
<comment type="subcellular location">
    <subcellularLocation>
        <location evidence="1">Cytoplasm</location>
    </subcellularLocation>
</comment>
<comment type="similarity">
    <text evidence="1">Belongs to the purine/pyrimidine phosphoribosyltransferase family.</text>
</comment>
<accession>A0RJ16</accession>
<name>APT_BACAH</name>
<protein>
    <recommendedName>
        <fullName evidence="1">Adenine phosphoribosyltransferase</fullName>
        <shortName evidence="1">APRT</shortName>
        <ecNumber evidence="1">2.4.2.7</ecNumber>
    </recommendedName>
</protein>
<dbReference type="EC" id="2.4.2.7" evidence="1"/>
<dbReference type="EMBL" id="CP000485">
    <property type="protein sequence ID" value="ABK87209.1"/>
    <property type="molecule type" value="Genomic_DNA"/>
</dbReference>
<dbReference type="RefSeq" id="WP_000346214.1">
    <property type="nucleotide sequence ID" value="NC_008600.1"/>
</dbReference>
<dbReference type="SMR" id="A0RJ16"/>
<dbReference type="KEGG" id="btl:BALH_3989"/>
<dbReference type="HOGENOM" id="CLU_063339_3_0_9"/>
<dbReference type="UniPathway" id="UPA00588">
    <property type="reaction ID" value="UER00646"/>
</dbReference>
<dbReference type="GO" id="GO:0005737">
    <property type="term" value="C:cytoplasm"/>
    <property type="evidence" value="ECO:0007669"/>
    <property type="project" value="UniProtKB-SubCell"/>
</dbReference>
<dbReference type="GO" id="GO:0002055">
    <property type="term" value="F:adenine binding"/>
    <property type="evidence" value="ECO:0007669"/>
    <property type="project" value="TreeGrafter"/>
</dbReference>
<dbReference type="GO" id="GO:0003999">
    <property type="term" value="F:adenine phosphoribosyltransferase activity"/>
    <property type="evidence" value="ECO:0007669"/>
    <property type="project" value="UniProtKB-UniRule"/>
</dbReference>
<dbReference type="GO" id="GO:0016208">
    <property type="term" value="F:AMP binding"/>
    <property type="evidence" value="ECO:0007669"/>
    <property type="project" value="TreeGrafter"/>
</dbReference>
<dbReference type="GO" id="GO:0006168">
    <property type="term" value="P:adenine salvage"/>
    <property type="evidence" value="ECO:0007669"/>
    <property type="project" value="InterPro"/>
</dbReference>
<dbReference type="GO" id="GO:0044209">
    <property type="term" value="P:AMP salvage"/>
    <property type="evidence" value="ECO:0007669"/>
    <property type="project" value="UniProtKB-UniRule"/>
</dbReference>
<dbReference type="GO" id="GO:0006166">
    <property type="term" value="P:purine ribonucleoside salvage"/>
    <property type="evidence" value="ECO:0007669"/>
    <property type="project" value="UniProtKB-KW"/>
</dbReference>
<dbReference type="CDD" id="cd06223">
    <property type="entry name" value="PRTases_typeI"/>
    <property type="match status" value="1"/>
</dbReference>
<dbReference type="FunFam" id="3.40.50.2020:FF:000004">
    <property type="entry name" value="Adenine phosphoribosyltransferase"/>
    <property type="match status" value="1"/>
</dbReference>
<dbReference type="Gene3D" id="3.40.50.2020">
    <property type="match status" value="1"/>
</dbReference>
<dbReference type="HAMAP" id="MF_00004">
    <property type="entry name" value="Aden_phosphoribosyltr"/>
    <property type="match status" value="1"/>
</dbReference>
<dbReference type="InterPro" id="IPR005764">
    <property type="entry name" value="Ade_phspho_trans"/>
</dbReference>
<dbReference type="InterPro" id="IPR000836">
    <property type="entry name" value="PRibTrfase_dom"/>
</dbReference>
<dbReference type="InterPro" id="IPR029057">
    <property type="entry name" value="PRTase-like"/>
</dbReference>
<dbReference type="InterPro" id="IPR050054">
    <property type="entry name" value="UPRTase/APRTase"/>
</dbReference>
<dbReference type="NCBIfam" id="TIGR01090">
    <property type="entry name" value="apt"/>
    <property type="match status" value="1"/>
</dbReference>
<dbReference type="NCBIfam" id="NF002633">
    <property type="entry name" value="PRK02304.1-2"/>
    <property type="match status" value="1"/>
</dbReference>
<dbReference type="NCBIfam" id="NF002634">
    <property type="entry name" value="PRK02304.1-3"/>
    <property type="match status" value="1"/>
</dbReference>
<dbReference type="NCBIfam" id="NF002636">
    <property type="entry name" value="PRK02304.1-5"/>
    <property type="match status" value="1"/>
</dbReference>
<dbReference type="PANTHER" id="PTHR32315">
    <property type="entry name" value="ADENINE PHOSPHORIBOSYLTRANSFERASE"/>
    <property type="match status" value="1"/>
</dbReference>
<dbReference type="PANTHER" id="PTHR32315:SF3">
    <property type="entry name" value="ADENINE PHOSPHORIBOSYLTRANSFERASE"/>
    <property type="match status" value="1"/>
</dbReference>
<dbReference type="Pfam" id="PF00156">
    <property type="entry name" value="Pribosyltran"/>
    <property type="match status" value="1"/>
</dbReference>
<dbReference type="SUPFAM" id="SSF53271">
    <property type="entry name" value="PRTase-like"/>
    <property type="match status" value="1"/>
</dbReference>
<evidence type="ECO:0000255" key="1">
    <source>
        <dbReference type="HAMAP-Rule" id="MF_00004"/>
    </source>
</evidence>